<feature type="chain" id="PRO_0000411419" description="Probable nicotinate-nucleotide adenylyltransferase">
    <location>
        <begin position="1"/>
        <end position="210"/>
    </location>
</feature>
<evidence type="ECO:0000255" key="1">
    <source>
        <dbReference type="HAMAP-Rule" id="MF_00244"/>
    </source>
</evidence>
<organism>
    <name type="scientific">Streptococcus pyogenes serotype M3 (strain SSI-1)</name>
    <dbReference type="NCBI Taxonomy" id="193567"/>
    <lineage>
        <taxon>Bacteria</taxon>
        <taxon>Bacillati</taxon>
        <taxon>Bacillota</taxon>
        <taxon>Bacilli</taxon>
        <taxon>Lactobacillales</taxon>
        <taxon>Streptococcaceae</taxon>
        <taxon>Streptococcus</taxon>
    </lineage>
</organism>
<comment type="function">
    <text evidence="1">Catalyzes the reversible adenylation of nicotinate mononucleotide (NaMN) to nicotinic acid adenine dinucleotide (NaAD).</text>
</comment>
<comment type="catalytic activity">
    <reaction evidence="1">
        <text>nicotinate beta-D-ribonucleotide + ATP + H(+) = deamido-NAD(+) + diphosphate</text>
        <dbReference type="Rhea" id="RHEA:22860"/>
        <dbReference type="ChEBI" id="CHEBI:15378"/>
        <dbReference type="ChEBI" id="CHEBI:30616"/>
        <dbReference type="ChEBI" id="CHEBI:33019"/>
        <dbReference type="ChEBI" id="CHEBI:57502"/>
        <dbReference type="ChEBI" id="CHEBI:58437"/>
        <dbReference type="EC" id="2.7.7.18"/>
    </reaction>
</comment>
<comment type="pathway">
    <text evidence="1">Cofactor biosynthesis; NAD(+) biosynthesis; deamido-NAD(+) from nicotinate D-ribonucleotide: step 1/1.</text>
</comment>
<comment type="similarity">
    <text evidence="1">Belongs to the NadD family.</text>
</comment>
<sequence length="210" mass="24387">MALELLTPFTKVELEEEKKESNRKQIGILGGNFNPIHNAHLVVADQVRQQLGLDQVLLMPECKPPHVDAKETIDEKHRLRMLELAIEDVEGLAIETCELERQGISYTYDTMLYLTEQHPDVDFYFIIGADMVDYLPKWHRIDELVKLVQFVGVQRPKYKAGTSYPVIWVDLPLMDISSSMIRDFIKKGRQPNYLLPKRVLDYITQEGLYQ</sequence>
<keyword id="KW-0067">ATP-binding</keyword>
<keyword id="KW-0520">NAD</keyword>
<keyword id="KW-0547">Nucleotide-binding</keyword>
<keyword id="KW-0548">Nucleotidyltransferase</keyword>
<keyword id="KW-0662">Pyridine nucleotide biosynthesis</keyword>
<keyword id="KW-0808">Transferase</keyword>
<accession>P0DC63</accession>
<accession>Q8K8L2</accession>
<gene>
    <name evidence="1" type="primary">nadD</name>
    <name type="ordered locus">SPs1634</name>
</gene>
<dbReference type="EC" id="2.7.7.18" evidence="1"/>
<dbReference type="EMBL" id="BA000034">
    <property type="protein sequence ID" value="BAC64729.1"/>
    <property type="molecule type" value="Genomic_DNA"/>
</dbReference>
<dbReference type="RefSeq" id="WP_002991091.1">
    <property type="nucleotide sequence ID" value="NC_004606.1"/>
</dbReference>
<dbReference type="SMR" id="P0DC63"/>
<dbReference type="KEGG" id="sps:SPs1634"/>
<dbReference type="HOGENOM" id="CLU_069765_3_1_9"/>
<dbReference type="UniPathway" id="UPA00253">
    <property type="reaction ID" value="UER00332"/>
</dbReference>
<dbReference type="GO" id="GO:0005524">
    <property type="term" value="F:ATP binding"/>
    <property type="evidence" value="ECO:0007669"/>
    <property type="project" value="UniProtKB-KW"/>
</dbReference>
<dbReference type="GO" id="GO:0004515">
    <property type="term" value="F:nicotinate-nucleotide adenylyltransferase activity"/>
    <property type="evidence" value="ECO:0007669"/>
    <property type="project" value="UniProtKB-UniRule"/>
</dbReference>
<dbReference type="GO" id="GO:0009435">
    <property type="term" value="P:NAD biosynthetic process"/>
    <property type="evidence" value="ECO:0007669"/>
    <property type="project" value="UniProtKB-UniRule"/>
</dbReference>
<dbReference type="CDD" id="cd02165">
    <property type="entry name" value="NMNAT"/>
    <property type="match status" value="1"/>
</dbReference>
<dbReference type="FunFam" id="3.40.50.620:FF:000079">
    <property type="entry name" value="Probable nicotinate-nucleotide adenylyltransferase"/>
    <property type="match status" value="1"/>
</dbReference>
<dbReference type="Gene3D" id="3.40.50.620">
    <property type="entry name" value="HUPs"/>
    <property type="match status" value="1"/>
</dbReference>
<dbReference type="HAMAP" id="MF_00244">
    <property type="entry name" value="NaMN_adenylyltr"/>
    <property type="match status" value="1"/>
</dbReference>
<dbReference type="InterPro" id="IPR004821">
    <property type="entry name" value="Cyt_trans-like"/>
</dbReference>
<dbReference type="InterPro" id="IPR005248">
    <property type="entry name" value="NadD/NMNAT"/>
</dbReference>
<dbReference type="InterPro" id="IPR014729">
    <property type="entry name" value="Rossmann-like_a/b/a_fold"/>
</dbReference>
<dbReference type="NCBIfam" id="TIGR00125">
    <property type="entry name" value="cyt_tran_rel"/>
    <property type="match status" value="1"/>
</dbReference>
<dbReference type="NCBIfam" id="TIGR00482">
    <property type="entry name" value="nicotinate (nicotinamide) nucleotide adenylyltransferase"/>
    <property type="match status" value="1"/>
</dbReference>
<dbReference type="NCBIfam" id="NF000840">
    <property type="entry name" value="PRK00071.1-3"/>
    <property type="match status" value="1"/>
</dbReference>
<dbReference type="NCBIfam" id="NF000841">
    <property type="entry name" value="PRK00071.1-4"/>
    <property type="match status" value="1"/>
</dbReference>
<dbReference type="PANTHER" id="PTHR39321">
    <property type="entry name" value="NICOTINATE-NUCLEOTIDE ADENYLYLTRANSFERASE-RELATED"/>
    <property type="match status" value="1"/>
</dbReference>
<dbReference type="PANTHER" id="PTHR39321:SF3">
    <property type="entry name" value="PHOSPHOPANTETHEINE ADENYLYLTRANSFERASE"/>
    <property type="match status" value="1"/>
</dbReference>
<dbReference type="Pfam" id="PF01467">
    <property type="entry name" value="CTP_transf_like"/>
    <property type="match status" value="1"/>
</dbReference>
<dbReference type="SUPFAM" id="SSF52374">
    <property type="entry name" value="Nucleotidylyl transferase"/>
    <property type="match status" value="1"/>
</dbReference>
<protein>
    <recommendedName>
        <fullName evidence="1">Probable nicotinate-nucleotide adenylyltransferase</fullName>
        <ecNumber evidence="1">2.7.7.18</ecNumber>
    </recommendedName>
    <alternativeName>
        <fullName evidence="1">Deamido-NAD(+) diphosphorylase</fullName>
    </alternativeName>
    <alternativeName>
        <fullName evidence="1">Deamido-NAD(+) pyrophosphorylase</fullName>
    </alternativeName>
    <alternativeName>
        <fullName evidence="1">Nicotinate mononucleotide adenylyltransferase</fullName>
        <shortName evidence="1">NaMN adenylyltransferase</shortName>
    </alternativeName>
</protein>
<name>NADD_STRPQ</name>
<reference key="1">
    <citation type="journal article" date="2003" name="Genome Res.">
        <title>Genome sequence of an M3 strain of Streptococcus pyogenes reveals a large-scale genomic rearrangement in invasive strains and new insights into phage evolution.</title>
        <authorList>
            <person name="Nakagawa I."/>
            <person name="Kurokawa K."/>
            <person name="Yamashita A."/>
            <person name="Nakata M."/>
            <person name="Tomiyasu Y."/>
            <person name="Okahashi N."/>
            <person name="Kawabata S."/>
            <person name="Yamazaki K."/>
            <person name="Shiba T."/>
            <person name="Yasunaga T."/>
            <person name="Hayashi H."/>
            <person name="Hattori M."/>
            <person name="Hamada S."/>
        </authorList>
    </citation>
    <scope>NUCLEOTIDE SEQUENCE [LARGE SCALE GENOMIC DNA]</scope>
    <source>
        <strain>SSI-1</strain>
    </source>
</reference>
<proteinExistence type="inferred from homology"/>